<dbReference type="PIR" id="S00525">
    <property type="entry name" value="HATTAP"/>
</dbReference>
<dbReference type="SMR" id="P13273"/>
<dbReference type="Proteomes" id="UP000694380">
    <property type="component" value="Unplaced"/>
</dbReference>
<dbReference type="GO" id="GO:0072562">
    <property type="term" value="C:blood microparticle"/>
    <property type="evidence" value="ECO:0007669"/>
    <property type="project" value="TreeGrafter"/>
</dbReference>
<dbReference type="GO" id="GO:0031838">
    <property type="term" value="C:haptoglobin-hemoglobin complex"/>
    <property type="evidence" value="ECO:0007669"/>
    <property type="project" value="TreeGrafter"/>
</dbReference>
<dbReference type="GO" id="GO:0005833">
    <property type="term" value="C:hemoglobin complex"/>
    <property type="evidence" value="ECO:0007669"/>
    <property type="project" value="InterPro"/>
</dbReference>
<dbReference type="GO" id="GO:0031720">
    <property type="term" value="F:haptoglobin binding"/>
    <property type="evidence" value="ECO:0007669"/>
    <property type="project" value="TreeGrafter"/>
</dbReference>
<dbReference type="GO" id="GO:0020037">
    <property type="term" value="F:heme binding"/>
    <property type="evidence" value="ECO:0007669"/>
    <property type="project" value="InterPro"/>
</dbReference>
<dbReference type="GO" id="GO:0005506">
    <property type="term" value="F:iron ion binding"/>
    <property type="evidence" value="ECO:0007669"/>
    <property type="project" value="InterPro"/>
</dbReference>
<dbReference type="GO" id="GO:0043177">
    <property type="term" value="F:organic acid binding"/>
    <property type="evidence" value="ECO:0007669"/>
    <property type="project" value="TreeGrafter"/>
</dbReference>
<dbReference type="GO" id="GO:0019825">
    <property type="term" value="F:oxygen binding"/>
    <property type="evidence" value="ECO:0007669"/>
    <property type="project" value="InterPro"/>
</dbReference>
<dbReference type="GO" id="GO:0005344">
    <property type="term" value="F:oxygen carrier activity"/>
    <property type="evidence" value="ECO:0007669"/>
    <property type="project" value="UniProtKB-KW"/>
</dbReference>
<dbReference type="GO" id="GO:0004601">
    <property type="term" value="F:peroxidase activity"/>
    <property type="evidence" value="ECO:0007669"/>
    <property type="project" value="TreeGrafter"/>
</dbReference>
<dbReference type="GO" id="GO:0042744">
    <property type="term" value="P:hydrogen peroxide catabolic process"/>
    <property type="evidence" value="ECO:0007669"/>
    <property type="project" value="TreeGrafter"/>
</dbReference>
<dbReference type="CDD" id="cd08927">
    <property type="entry name" value="Hb-alpha-like"/>
    <property type="match status" value="1"/>
</dbReference>
<dbReference type="FunFam" id="1.10.490.10:FF:000002">
    <property type="entry name" value="Hemoglobin subunit alpha"/>
    <property type="match status" value="1"/>
</dbReference>
<dbReference type="Gene3D" id="1.10.490.10">
    <property type="entry name" value="Globins"/>
    <property type="match status" value="1"/>
</dbReference>
<dbReference type="InterPro" id="IPR000971">
    <property type="entry name" value="Globin"/>
</dbReference>
<dbReference type="InterPro" id="IPR009050">
    <property type="entry name" value="Globin-like_sf"/>
</dbReference>
<dbReference type="InterPro" id="IPR012292">
    <property type="entry name" value="Globin/Proto"/>
</dbReference>
<dbReference type="InterPro" id="IPR002338">
    <property type="entry name" value="Hemoglobin_a-typ"/>
</dbReference>
<dbReference type="InterPro" id="IPR050056">
    <property type="entry name" value="Hemoglobin_oxygen_transport"/>
</dbReference>
<dbReference type="InterPro" id="IPR002339">
    <property type="entry name" value="Hemoglobin_pi"/>
</dbReference>
<dbReference type="PANTHER" id="PTHR11442">
    <property type="entry name" value="HEMOGLOBIN FAMILY MEMBER"/>
    <property type="match status" value="1"/>
</dbReference>
<dbReference type="PANTHER" id="PTHR11442:SF48">
    <property type="entry name" value="HEMOGLOBIN SUBUNIT ALPHA"/>
    <property type="match status" value="1"/>
</dbReference>
<dbReference type="Pfam" id="PF00042">
    <property type="entry name" value="Globin"/>
    <property type="match status" value="1"/>
</dbReference>
<dbReference type="PRINTS" id="PR00612">
    <property type="entry name" value="ALPHAHAEM"/>
</dbReference>
<dbReference type="PRINTS" id="PR00815">
    <property type="entry name" value="PIHAEM"/>
</dbReference>
<dbReference type="SUPFAM" id="SSF46458">
    <property type="entry name" value="Globin-like"/>
    <property type="match status" value="1"/>
</dbReference>
<dbReference type="PROSITE" id="PS01033">
    <property type="entry name" value="GLOBIN"/>
    <property type="match status" value="1"/>
</dbReference>
<accession>P13273</accession>
<name>HBA_CHRPI</name>
<keyword id="KW-0903">Direct protein sequencing</keyword>
<keyword id="KW-0349">Heme</keyword>
<keyword id="KW-0408">Iron</keyword>
<keyword id="KW-0479">Metal-binding</keyword>
<keyword id="KW-0561">Oxygen transport</keyword>
<keyword id="KW-1185">Reference proteome</keyword>
<keyword id="KW-0813">Transport</keyword>
<feature type="chain" id="PRO_0000052602" description="Hemoglobin subunit alpha-A">
    <location>
        <begin position="1"/>
        <end position="141"/>
    </location>
</feature>
<feature type="domain" description="Globin" evidence="1">
    <location>
        <begin position="1"/>
        <end position="141"/>
    </location>
</feature>
<feature type="binding site" evidence="1">
    <location>
        <position position="58"/>
    </location>
    <ligand>
        <name>O2</name>
        <dbReference type="ChEBI" id="CHEBI:15379"/>
    </ligand>
</feature>
<feature type="binding site" description="proximal binding residue" evidence="1">
    <location>
        <position position="87"/>
    </location>
    <ligand>
        <name>heme b</name>
        <dbReference type="ChEBI" id="CHEBI:60344"/>
    </ligand>
    <ligandPart>
        <name>Fe</name>
        <dbReference type="ChEBI" id="CHEBI:18248"/>
    </ligandPart>
</feature>
<evidence type="ECO:0000255" key="1">
    <source>
        <dbReference type="PROSITE-ProRule" id="PRU00238"/>
    </source>
</evidence>
<gene>
    <name type="primary">HBAA</name>
</gene>
<comment type="function">
    <text>Involved in oxygen transport from the lung to the various peripheral tissues.</text>
</comment>
<comment type="subunit">
    <text>Heterotetramer of two alpha chains and two beta chains.</text>
</comment>
<comment type="tissue specificity">
    <text>Red blood cells.</text>
</comment>
<comment type="similarity">
    <text evidence="1">Belongs to the globin family.</text>
</comment>
<organism>
    <name type="scientific">Chrysemys picta bellii</name>
    <name type="common">Western painted turtle</name>
    <name type="synonym">Emys bellii</name>
    <dbReference type="NCBI Taxonomy" id="8478"/>
    <lineage>
        <taxon>Eukaryota</taxon>
        <taxon>Metazoa</taxon>
        <taxon>Chordata</taxon>
        <taxon>Craniata</taxon>
        <taxon>Vertebrata</taxon>
        <taxon>Euteleostomi</taxon>
        <taxon>Archelosauria</taxon>
        <taxon>Testudinata</taxon>
        <taxon>Testudines</taxon>
        <taxon>Cryptodira</taxon>
        <taxon>Durocryptodira</taxon>
        <taxon>Testudinoidea</taxon>
        <taxon>Emydidae</taxon>
        <taxon>Chrysemys</taxon>
    </lineage>
</organism>
<reference key="1">
    <citation type="journal article" date="1988" name="Biol. Chem. Hoppe-Seyler">
        <title>Hemoglobins of reptiles. The primary structure of the major and minor hemoglobin component of adult Western painted turtle (Chrysemys picta bellii).</title>
        <authorList>
            <person name="Ruecknagel K.P."/>
            <person name="Braunitzer G."/>
        </authorList>
    </citation>
    <scope>PROTEIN SEQUENCE</scope>
</reference>
<proteinExistence type="evidence at protein level"/>
<protein>
    <recommendedName>
        <fullName>Hemoglobin subunit alpha-A</fullName>
    </recommendedName>
    <alternativeName>
        <fullName>Alpha-A-globin</fullName>
    </alternativeName>
    <alternativeName>
        <fullName>Hemoglobin alpha-A chain</fullName>
    </alternativeName>
</protein>
<sequence length="141" mass="15642">VLNAGDKANVKAVWNKVAAHVEEYGAETLERMFTVYPQTKTYFPHFDLHHGSAQIRTHGKKVLTALGEAVNHIDDLASALSKLSDIHAQTLRVDPVNFKFLNHCFLVVVAIHQPSVLTPEVHVSLDKFLSAVGTVLTSKYR</sequence>